<dbReference type="EC" id="2.4.1.21" evidence="1"/>
<dbReference type="EMBL" id="CP000922">
    <property type="protein sequence ID" value="ACJ32760.1"/>
    <property type="molecule type" value="Genomic_DNA"/>
</dbReference>
<dbReference type="RefSeq" id="WP_012574087.1">
    <property type="nucleotide sequence ID" value="NC_011567.1"/>
</dbReference>
<dbReference type="SMR" id="B7GK04"/>
<dbReference type="STRING" id="491915.Aflv_0376"/>
<dbReference type="CAZy" id="GT5">
    <property type="family name" value="Glycosyltransferase Family 5"/>
</dbReference>
<dbReference type="GeneID" id="7036633"/>
<dbReference type="KEGG" id="afl:Aflv_0376"/>
<dbReference type="PATRIC" id="fig|491915.6.peg.386"/>
<dbReference type="eggNOG" id="COG0297">
    <property type="taxonomic scope" value="Bacteria"/>
</dbReference>
<dbReference type="HOGENOM" id="CLU_009583_18_2_9"/>
<dbReference type="UniPathway" id="UPA00164"/>
<dbReference type="Proteomes" id="UP000000742">
    <property type="component" value="Chromosome"/>
</dbReference>
<dbReference type="GO" id="GO:0009011">
    <property type="term" value="F:alpha-1,4-glucan glucosyltransferase (ADP-glucose donor) activity"/>
    <property type="evidence" value="ECO:0007669"/>
    <property type="project" value="UniProtKB-UniRule"/>
</dbReference>
<dbReference type="GO" id="GO:0004373">
    <property type="term" value="F:alpha-1,4-glucan glucosyltransferase (UDP-glucose donor) activity"/>
    <property type="evidence" value="ECO:0007669"/>
    <property type="project" value="InterPro"/>
</dbReference>
<dbReference type="GO" id="GO:0005978">
    <property type="term" value="P:glycogen biosynthetic process"/>
    <property type="evidence" value="ECO:0007669"/>
    <property type="project" value="UniProtKB-UniRule"/>
</dbReference>
<dbReference type="CDD" id="cd03791">
    <property type="entry name" value="GT5_Glycogen_synthase_DULL1-like"/>
    <property type="match status" value="1"/>
</dbReference>
<dbReference type="Gene3D" id="3.40.50.2000">
    <property type="entry name" value="Glycogen Phosphorylase B"/>
    <property type="match status" value="2"/>
</dbReference>
<dbReference type="HAMAP" id="MF_00484">
    <property type="entry name" value="Glycogen_synth"/>
    <property type="match status" value="1"/>
</dbReference>
<dbReference type="InterPro" id="IPR001296">
    <property type="entry name" value="Glyco_trans_1"/>
</dbReference>
<dbReference type="InterPro" id="IPR011835">
    <property type="entry name" value="GS/SS"/>
</dbReference>
<dbReference type="InterPro" id="IPR013534">
    <property type="entry name" value="Starch_synth_cat_dom"/>
</dbReference>
<dbReference type="NCBIfam" id="TIGR02095">
    <property type="entry name" value="glgA"/>
    <property type="match status" value="1"/>
</dbReference>
<dbReference type="NCBIfam" id="NF001898">
    <property type="entry name" value="PRK00654.1-1"/>
    <property type="match status" value="1"/>
</dbReference>
<dbReference type="NCBIfam" id="NF001899">
    <property type="entry name" value="PRK00654.1-2"/>
    <property type="match status" value="1"/>
</dbReference>
<dbReference type="PANTHER" id="PTHR45825:SF11">
    <property type="entry name" value="ALPHA AMYLASE DOMAIN-CONTAINING PROTEIN"/>
    <property type="match status" value="1"/>
</dbReference>
<dbReference type="PANTHER" id="PTHR45825">
    <property type="entry name" value="GRANULE-BOUND STARCH SYNTHASE 1, CHLOROPLASTIC/AMYLOPLASTIC"/>
    <property type="match status" value="1"/>
</dbReference>
<dbReference type="Pfam" id="PF08323">
    <property type="entry name" value="Glyco_transf_5"/>
    <property type="match status" value="1"/>
</dbReference>
<dbReference type="Pfam" id="PF00534">
    <property type="entry name" value="Glycos_transf_1"/>
    <property type="match status" value="1"/>
</dbReference>
<dbReference type="SUPFAM" id="SSF53756">
    <property type="entry name" value="UDP-Glycosyltransferase/glycogen phosphorylase"/>
    <property type="match status" value="1"/>
</dbReference>
<gene>
    <name evidence="1" type="primary">glgA</name>
    <name type="ordered locus">Aflv_0376</name>
</gene>
<protein>
    <recommendedName>
        <fullName evidence="1">Glycogen synthase</fullName>
        <ecNumber evidence="1">2.4.1.21</ecNumber>
    </recommendedName>
    <alternativeName>
        <fullName evidence="1">Starch [bacterial glycogen] synthase</fullName>
    </alternativeName>
</protein>
<proteinExistence type="inferred from homology"/>
<reference key="1">
    <citation type="journal article" date="2008" name="Genome Biol.">
        <title>Encapsulated in silica: genome, proteome and physiology of the thermophilic bacterium Anoxybacillus flavithermus WK1.</title>
        <authorList>
            <person name="Saw J.H."/>
            <person name="Mountain B.W."/>
            <person name="Feng L."/>
            <person name="Omelchenko M.V."/>
            <person name="Hou S."/>
            <person name="Saito J.A."/>
            <person name="Stott M.B."/>
            <person name="Li D."/>
            <person name="Zhao G."/>
            <person name="Wu J."/>
            <person name="Galperin M.Y."/>
            <person name="Koonin E.V."/>
            <person name="Makarova K.S."/>
            <person name="Wolf Y.I."/>
            <person name="Rigden D.J."/>
            <person name="Dunfield P.F."/>
            <person name="Wang L."/>
            <person name="Alam M."/>
        </authorList>
    </citation>
    <scope>NUCLEOTIDE SEQUENCE [LARGE SCALE GENOMIC DNA]</scope>
    <source>
        <strain>DSM 21510 / WK1</strain>
    </source>
</reference>
<keyword id="KW-0320">Glycogen biosynthesis</keyword>
<keyword id="KW-0328">Glycosyltransferase</keyword>
<keyword id="KW-0808">Transferase</keyword>
<sequence>MKVLFVVSECVPFVKTGGLADVAGALPKELKKLGTDVRVMLPKYGLIPQHMRQKMKKIAELVVRVGWRRQYCGIEQLEHEGITYYFVDNEYYFKRDSLYGHYDDGERFSYFCRAVLDCLPVIDFQPNVIHCHDWHTGMIPFLLREEYMRNSFYAQMKTVFTIHNLQFQGIFPREILGDLLNLSDRYFSIEHLEFYGHVSFMKGALVSAHLITTVSPTYKEEIQTPYYGERLDGLLRARSSHLVGILNGIDDEIYNPKKDPYIAVPYDVTTIARKSINKRALQQHFSLPSEEDVPVIAIVSRLTKQKGLDLVKCVFHEIIAEHVQMIILGTGEWEFEQFFQDMTMTYPDRVRVYIGFSEQLAHQIYAGADMFLMPSKFEPCGLGQMIAMRYGAVPIVRETGGLNDTVQSFNELTKEGTGFTFKNFNAHDMLYTIQRARSFYEQKEIWETIMKQAMSRDYSWAKSAFKYNQLYDELMAGSGIYVHE</sequence>
<feature type="chain" id="PRO_1000126054" description="Glycogen synthase">
    <location>
        <begin position="1"/>
        <end position="484"/>
    </location>
</feature>
<feature type="binding site" evidence="1">
    <location>
        <position position="15"/>
    </location>
    <ligand>
        <name>ADP-alpha-D-glucose</name>
        <dbReference type="ChEBI" id="CHEBI:57498"/>
    </ligand>
</feature>
<accession>B7GK04</accession>
<evidence type="ECO:0000255" key="1">
    <source>
        <dbReference type="HAMAP-Rule" id="MF_00484"/>
    </source>
</evidence>
<organism>
    <name type="scientific">Anoxybacillus flavithermus (strain DSM 21510 / WK1)</name>
    <dbReference type="NCBI Taxonomy" id="491915"/>
    <lineage>
        <taxon>Bacteria</taxon>
        <taxon>Bacillati</taxon>
        <taxon>Bacillota</taxon>
        <taxon>Bacilli</taxon>
        <taxon>Bacillales</taxon>
        <taxon>Anoxybacillaceae</taxon>
        <taxon>Anoxybacillus</taxon>
    </lineage>
</organism>
<comment type="function">
    <text evidence="1">Synthesizes alpha-1,4-glucan chains using ADP-glucose.</text>
</comment>
<comment type="catalytic activity">
    <reaction evidence="1">
        <text>[(1-&gt;4)-alpha-D-glucosyl](n) + ADP-alpha-D-glucose = [(1-&gt;4)-alpha-D-glucosyl](n+1) + ADP + H(+)</text>
        <dbReference type="Rhea" id="RHEA:18189"/>
        <dbReference type="Rhea" id="RHEA-COMP:9584"/>
        <dbReference type="Rhea" id="RHEA-COMP:9587"/>
        <dbReference type="ChEBI" id="CHEBI:15378"/>
        <dbReference type="ChEBI" id="CHEBI:15444"/>
        <dbReference type="ChEBI" id="CHEBI:57498"/>
        <dbReference type="ChEBI" id="CHEBI:456216"/>
        <dbReference type="EC" id="2.4.1.21"/>
    </reaction>
</comment>
<comment type="pathway">
    <text evidence="1">Glycan biosynthesis; glycogen biosynthesis.</text>
</comment>
<comment type="similarity">
    <text evidence="1">Belongs to the glycosyltransferase 1 family. Bacterial/plant glycogen synthase subfamily.</text>
</comment>
<name>GLGA_ANOFW</name>